<feature type="chain" id="PRO_1000056284" description="Ubiquinone/menaquinone biosynthesis C-methyltransferase UbiE">
    <location>
        <begin position="1"/>
        <end position="253"/>
    </location>
</feature>
<feature type="binding site" evidence="1">
    <location>
        <position position="76"/>
    </location>
    <ligand>
        <name>S-adenosyl-L-methionine</name>
        <dbReference type="ChEBI" id="CHEBI:59789"/>
    </ligand>
</feature>
<feature type="binding site" evidence="1">
    <location>
        <position position="97"/>
    </location>
    <ligand>
        <name>S-adenosyl-L-methionine</name>
        <dbReference type="ChEBI" id="CHEBI:59789"/>
    </ligand>
</feature>
<feature type="binding site" evidence="1">
    <location>
        <begin position="125"/>
        <end position="126"/>
    </location>
    <ligand>
        <name>S-adenosyl-L-methionine</name>
        <dbReference type="ChEBI" id="CHEBI:59789"/>
    </ligand>
</feature>
<comment type="function">
    <text evidence="1">Methyltransferase required for the conversion of demethylmenaquinol (DMKH2) to menaquinol (MKH2) and the conversion of 2-polyprenyl-6-methoxy-1,4-benzoquinol (DDMQH2) to 2-polyprenyl-3-methyl-6-methoxy-1,4-benzoquinol (DMQH2).</text>
</comment>
<comment type="catalytic activity">
    <reaction evidence="1">
        <text>a 2-demethylmenaquinol + S-adenosyl-L-methionine = a menaquinol + S-adenosyl-L-homocysteine + H(+)</text>
        <dbReference type="Rhea" id="RHEA:42640"/>
        <dbReference type="Rhea" id="RHEA-COMP:9539"/>
        <dbReference type="Rhea" id="RHEA-COMP:9563"/>
        <dbReference type="ChEBI" id="CHEBI:15378"/>
        <dbReference type="ChEBI" id="CHEBI:18151"/>
        <dbReference type="ChEBI" id="CHEBI:55437"/>
        <dbReference type="ChEBI" id="CHEBI:57856"/>
        <dbReference type="ChEBI" id="CHEBI:59789"/>
        <dbReference type="EC" id="2.1.1.163"/>
    </reaction>
</comment>
<comment type="catalytic activity">
    <reaction evidence="1">
        <text>a 2-methoxy-6-(all-trans-polyprenyl)benzene-1,4-diol + S-adenosyl-L-methionine = a 5-methoxy-2-methyl-3-(all-trans-polyprenyl)benzene-1,4-diol + S-adenosyl-L-homocysteine + H(+)</text>
        <dbReference type="Rhea" id="RHEA:28286"/>
        <dbReference type="Rhea" id="RHEA-COMP:10858"/>
        <dbReference type="Rhea" id="RHEA-COMP:10859"/>
        <dbReference type="ChEBI" id="CHEBI:15378"/>
        <dbReference type="ChEBI" id="CHEBI:57856"/>
        <dbReference type="ChEBI" id="CHEBI:59789"/>
        <dbReference type="ChEBI" id="CHEBI:84166"/>
        <dbReference type="ChEBI" id="CHEBI:84167"/>
        <dbReference type="EC" id="2.1.1.201"/>
    </reaction>
</comment>
<comment type="pathway">
    <text evidence="1">Quinol/quinone metabolism; menaquinone biosynthesis; menaquinol from 1,4-dihydroxy-2-naphthoate: step 2/2.</text>
</comment>
<comment type="pathway">
    <text evidence="1">Cofactor biosynthesis; ubiquinone biosynthesis.</text>
</comment>
<comment type="similarity">
    <text evidence="1">Belongs to the class I-like SAM-binding methyltransferase superfamily. MenG/UbiE family.</text>
</comment>
<keyword id="KW-0474">Menaquinone biosynthesis</keyword>
<keyword id="KW-0489">Methyltransferase</keyword>
<keyword id="KW-0949">S-adenosyl-L-methionine</keyword>
<keyword id="KW-0808">Transferase</keyword>
<keyword id="KW-0831">Ubiquinone biosynthesis</keyword>
<name>UBIE_RHOPS</name>
<gene>
    <name evidence="1" type="primary">ubiE</name>
    <name type="ordered locus">RPD_0211</name>
</gene>
<reference key="1">
    <citation type="submission" date="2006-03" db="EMBL/GenBank/DDBJ databases">
        <title>Complete sequence of Rhodopseudomonas palustris BisB5.</title>
        <authorList>
            <consortium name="US DOE Joint Genome Institute"/>
            <person name="Copeland A."/>
            <person name="Lucas S."/>
            <person name="Lapidus A."/>
            <person name="Barry K."/>
            <person name="Detter J.C."/>
            <person name="Glavina del Rio T."/>
            <person name="Hammon N."/>
            <person name="Israni S."/>
            <person name="Dalin E."/>
            <person name="Tice H."/>
            <person name="Pitluck S."/>
            <person name="Chain P."/>
            <person name="Malfatti S."/>
            <person name="Shin M."/>
            <person name="Vergez L."/>
            <person name="Schmutz J."/>
            <person name="Larimer F."/>
            <person name="Land M."/>
            <person name="Hauser L."/>
            <person name="Pelletier D.A."/>
            <person name="Kyrpides N."/>
            <person name="Lykidis A."/>
            <person name="Oda Y."/>
            <person name="Harwood C.S."/>
            <person name="Richardson P."/>
        </authorList>
    </citation>
    <scope>NUCLEOTIDE SEQUENCE [LARGE SCALE GENOMIC DNA]</scope>
    <source>
        <strain>BisB5</strain>
    </source>
</reference>
<evidence type="ECO:0000255" key="1">
    <source>
        <dbReference type="HAMAP-Rule" id="MF_01813"/>
    </source>
</evidence>
<dbReference type="EC" id="2.1.1.163" evidence="1"/>
<dbReference type="EC" id="2.1.1.201" evidence="1"/>
<dbReference type="EMBL" id="CP000283">
    <property type="protein sequence ID" value="ABE37451.1"/>
    <property type="molecule type" value="Genomic_DNA"/>
</dbReference>
<dbReference type="SMR" id="Q13EN8"/>
<dbReference type="STRING" id="316057.RPD_0211"/>
<dbReference type="KEGG" id="rpd:RPD_0211"/>
<dbReference type="eggNOG" id="COG2226">
    <property type="taxonomic scope" value="Bacteria"/>
</dbReference>
<dbReference type="HOGENOM" id="CLU_037990_0_1_5"/>
<dbReference type="BioCyc" id="RPAL316057:RPD_RS01070-MONOMER"/>
<dbReference type="UniPathway" id="UPA00079">
    <property type="reaction ID" value="UER00169"/>
</dbReference>
<dbReference type="UniPathway" id="UPA00232"/>
<dbReference type="Proteomes" id="UP000001818">
    <property type="component" value="Chromosome"/>
</dbReference>
<dbReference type="GO" id="GO:0008425">
    <property type="term" value="F:2-methoxy-6-polyprenyl-1,4-benzoquinol methyltransferase activity"/>
    <property type="evidence" value="ECO:0007669"/>
    <property type="project" value="UniProtKB-UniRule"/>
</dbReference>
<dbReference type="GO" id="GO:0043770">
    <property type="term" value="F:demethylmenaquinone methyltransferase activity"/>
    <property type="evidence" value="ECO:0007669"/>
    <property type="project" value="UniProtKB-UniRule"/>
</dbReference>
<dbReference type="GO" id="GO:0009060">
    <property type="term" value="P:aerobic respiration"/>
    <property type="evidence" value="ECO:0007669"/>
    <property type="project" value="UniProtKB-UniRule"/>
</dbReference>
<dbReference type="GO" id="GO:0009234">
    <property type="term" value="P:menaquinone biosynthetic process"/>
    <property type="evidence" value="ECO:0007669"/>
    <property type="project" value="UniProtKB-UniRule"/>
</dbReference>
<dbReference type="GO" id="GO:0032259">
    <property type="term" value="P:methylation"/>
    <property type="evidence" value="ECO:0007669"/>
    <property type="project" value="UniProtKB-KW"/>
</dbReference>
<dbReference type="CDD" id="cd02440">
    <property type="entry name" value="AdoMet_MTases"/>
    <property type="match status" value="1"/>
</dbReference>
<dbReference type="Gene3D" id="3.40.50.150">
    <property type="entry name" value="Vaccinia Virus protein VP39"/>
    <property type="match status" value="1"/>
</dbReference>
<dbReference type="HAMAP" id="MF_01813">
    <property type="entry name" value="MenG_UbiE_methyltr"/>
    <property type="match status" value="1"/>
</dbReference>
<dbReference type="InterPro" id="IPR029063">
    <property type="entry name" value="SAM-dependent_MTases_sf"/>
</dbReference>
<dbReference type="InterPro" id="IPR004033">
    <property type="entry name" value="UbiE/COQ5_MeTrFase"/>
</dbReference>
<dbReference type="InterPro" id="IPR023576">
    <property type="entry name" value="UbiE/COQ5_MeTrFase_CS"/>
</dbReference>
<dbReference type="NCBIfam" id="TIGR01934">
    <property type="entry name" value="MenG_MenH_UbiE"/>
    <property type="match status" value="1"/>
</dbReference>
<dbReference type="NCBIfam" id="NF001242">
    <property type="entry name" value="PRK00216.1-3"/>
    <property type="match status" value="1"/>
</dbReference>
<dbReference type="PANTHER" id="PTHR43591:SF24">
    <property type="entry name" value="2-METHOXY-6-POLYPRENYL-1,4-BENZOQUINOL METHYLASE, MITOCHONDRIAL"/>
    <property type="match status" value="1"/>
</dbReference>
<dbReference type="PANTHER" id="PTHR43591">
    <property type="entry name" value="METHYLTRANSFERASE"/>
    <property type="match status" value="1"/>
</dbReference>
<dbReference type="Pfam" id="PF01209">
    <property type="entry name" value="Ubie_methyltran"/>
    <property type="match status" value="1"/>
</dbReference>
<dbReference type="SUPFAM" id="SSF53335">
    <property type="entry name" value="S-adenosyl-L-methionine-dependent methyltransferases"/>
    <property type="match status" value="1"/>
</dbReference>
<dbReference type="PROSITE" id="PS51608">
    <property type="entry name" value="SAM_MT_UBIE"/>
    <property type="match status" value="1"/>
</dbReference>
<dbReference type="PROSITE" id="PS01183">
    <property type="entry name" value="UBIE_1"/>
    <property type="match status" value="1"/>
</dbReference>
<dbReference type="PROSITE" id="PS01184">
    <property type="entry name" value="UBIE_2"/>
    <property type="match status" value="1"/>
</dbReference>
<accession>Q13EN8</accession>
<sequence>MNQPGETTHFGFRDVPLNDKQTMVNDVFHSVASRYDLMNDLMSGGMHRLWKDVMITTLNPPRDDAPFRLLDVAGGTGDISFRAAKASGAGFQATVCDINTDMLEVGRQRAVQRHLDGQVDFVEGNAEALQFPDRSYDAYTIAFGIRNVPRIDLALKEAYRVLKPGSRFLCLEFSSVDVPGLNKIYDLFSFKVIPEIGRVVTGDAESYQYLVESIRKFPKPYDFAEMMRDAGFARVNWQMMSGGIVALHSGWRL</sequence>
<organism>
    <name type="scientific">Rhodopseudomonas palustris (strain BisB5)</name>
    <dbReference type="NCBI Taxonomy" id="316057"/>
    <lineage>
        <taxon>Bacteria</taxon>
        <taxon>Pseudomonadati</taxon>
        <taxon>Pseudomonadota</taxon>
        <taxon>Alphaproteobacteria</taxon>
        <taxon>Hyphomicrobiales</taxon>
        <taxon>Nitrobacteraceae</taxon>
        <taxon>Rhodopseudomonas</taxon>
    </lineage>
</organism>
<protein>
    <recommendedName>
        <fullName evidence="1">Ubiquinone/menaquinone biosynthesis C-methyltransferase UbiE</fullName>
        <ecNumber evidence="1">2.1.1.163</ecNumber>
        <ecNumber evidence="1">2.1.1.201</ecNumber>
    </recommendedName>
    <alternativeName>
        <fullName evidence="1">2-methoxy-6-polyprenyl-1,4-benzoquinol methylase</fullName>
    </alternativeName>
    <alternativeName>
        <fullName evidence="1">Demethylmenaquinone methyltransferase</fullName>
    </alternativeName>
</protein>
<proteinExistence type="inferred from homology"/>